<evidence type="ECO:0000250" key="1"/>
<evidence type="ECO:0000269" key="2">
    <source>
    </source>
</evidence>
<evidence type="ECO:0000269" key="3">
    <source>
    </source>
</evidence>
<evidence type="ECO:0000269" key="4">
    <source>
    </source>
</evidence>
<evidence type="ECO:0000305" key="5"/>
<sequence length="51" mass="6758">MARYRCCLTHSGSRCRRRRRRRCRRRRRRFGRRRRRRVCCRRYTVIRCTRQ</sequence>
<proteinExistence type="evidence at protein level"/>
<keyword id="KW-0158">Chromosome</keyword>
<keyword id="KW-0217">Developmental protein</keyword>
<keyword id="KW-0221">Differentiation</keyword>
<keyword id="KW-0903">Direct protein sequencing</keyword>
<keyword id="KW-1015">Disulfide bond</keyword>
<keyword id="KW-0226">DNA condensation</keyword>
<keyword id="KW-0238">DNA-binding</keyword>
<keyword id="KW-0544">Nucleosome core</keyword>
<keyword id="KW-0539">Nucleus</keyword>
<keyword id="KW-0597">Phosphoprotein</keyword>
<keyword id="KW-1185">Reference proteome</keyword>
<keyword id="KW-0744">Spermatogenesis</keyword>
<feature type="initiator methionine" description="Removed" evidence="3 4">
    <location>
        <position position="1"/>
    </location>
</feature>
<feature type="chain" id="PRO_0000191451" description="Sperm protamine P1" evidence="3 4">
    <location>
        <begin position="2"/>
        <end position="51"/>
    </location>
</feature>
<feature type="disulfide bond" description="Interchain (with C-23)" evidence="2">
    <location>
        <position position="6"/>
    </location>
</feature>
<feature type="disulfide bond" evidence="2">
    <location>
        <begin position="7"/>
        <end position="15"/>
    </location>
</feature>
<feature type="disulfide bond" description="Interchain (with C-6)" evidence="2">
    <location>
        <position position="23"/>
    </location>
</feature>
<feature type="disulfide bond" description="Interchain (with C-39)" evidence="2">
    <location>
        <position position="39"/>
    </location>
</feature>
<feature type="disulfide bond" evidence="2">
    <location>
        <begin position="40"/>
        <end position="48"/>
    </location>
</feature>
<feature type="sequence conflict" description="In Ref. 2; AAA30742." evidence="5" ref="2">
    <original>F</original>
    <variation>S</variation>
    <location>
        <position position="30"/>
    </location>
</feature>
<feature type="sequence conflict" description="In Ref. 4; AA sequence." evidence="5" ref="4">
    <location>
        <begin position="40"/>
        <end position="42"/>
    </location>
</feature>
<gene>
    <name type="primary">PRM1</name>
    <name type="synonym">PRM-1</name>
</gene>
<accession>P02318</accession>
<reference key="1">
    <citation type="journal article" date="1987" name="DNA">
        <title>Cloning of bovine P1 protamine cDNA and the evolution of vertebrate P1 protamines.</title>
        <authorList>
            <person name="Krawetz S.A."/>
            <person name="Connor W."/>
            <person name="Dixon G.H."/>
        </authorList>
    </citation>
    <scope>NUCLEOTIDE SEQUENCE [MRNA]</scope>
</reference>
<reference key="2">
    <citation type="journal article" date="1987" name="Biol. Chem. Hoppe-Seyler">
        <title>Nucleotide sequence of a bovine protamine cDNA.</title>
        <authorList>
            <person name="Lee C.-H."/>
            <person name="Mansouri A."/>
            <person name="Hecht W."/>
            <person name="Hecht N.B."/>
            <person name="Engel W."/>
        </authorList>
    </citation>
    <scope>NUCLEOTIDE SEQUENCE [MRNA]</scope>
</reference>
<reference key="3">
    <citation type="journal article" date="1988" name="J. Biol. Chem.">
        <title>Bovine protamine genes contain a single intron. The structures of the two alleles.</title>
        <authorList>
            <person name="Krawetz S.A."/>
            <person name="Connor W."/>
            <person name="Dixon G.H."/>
        </authorList>
    </citation>
    <scope>NUCLEOTIDE SEQUENCE [GENOMIC DNA]</scope>
</reference>
<reference key="4">
    <citation type="journal article" date="1972" name="Biochim. Biophys. Acta">
        <title>The complete amino acid sequence of the basic nuclear protein of bull spermatozoa.</title>
        <authorList>
            <person name="Coelingh J.P."/>
            <person name="Monfoort C.H."/>
            <person name="Rozijn T.H."/>
            <person name="Gevers Leuven J.A."/>
            <person name="Schiphof R."/>
            <person name="Steyn-Parve E.P."/>
            <person name="Braunitzer G."/>
            <person name="Schrank B."/>
            <person name="Ruhfus A."/>
        </authorList>
    </citation>
    <scope>PROTEIN SEQUENCE OF 2-51</scope>
</reference>
<reference key="5">
    <citation type="journal article" date="1986" name="Biochim. Biophys. Acta">
        <title>A corrected primary sequence for bull protamine.</title>
        <authorList>
            <person name="Mazrimas J.A."/>
            <person name="Corzett M."/>
            <person name="Campos C."/>
            <person name="Balhorn R."/>
        </authorList>
    </citation>
    <scope>PROTEIN SEQUENCE OF 2-51</scope>
</reference>
<reference key="6">
    <citation type="journal article" date="1991" name="Biochemistry">
        <title>Identification of bull protamine disulfides.</title>
        <authorList>
            <person name="Balhorn R."/>
            <person name="Corzett M."/>
            <person name="Mazrimas J."/>
            <person name="Watkins B."/>
        </authorList>
    </citation>
    <scope>DISULFIDE BONDS</scope>
</reference>
<dbReference type="EMBL" id="M14559">
    <property type="protein sequence ID" value="AAA30741.1"/>
    <property type="molecule type" value="mRNA"/>
</dbReference>
<dbReference type="EMBL" id="M18625">
    <property type="protein sequence ID" value="AAA30742.1"/>
    <property type="molecule type" value="mRNA"/>
</dbReference>
<dbReference type="EMBL" id="M18396">
    <property type="protein sequence ID" value="AAA30735.1"/>
    <property type="molecule type" value="Genomic_DNA"/>
</dbReference>
<dbReference type="EMBL" id="M18395">
    <property type="protein sequence ID" value="AAA30736.1"/>
    <property type="molecule type" value="Genomic_DNA"/>
</dbReference>
<dbReference type="PIR" id="A29911">
    <property type="entry name" value="HSBOS"/>
</dbReference>
<dbReference type="RefSeq" id="NP_776581.1">
    <property type="nucleotide sequence ID" value="NM_174156.2"/>
</dbReference>
<dbReference type="PaxDb" id="9913-ENSBTAP00000043964"/>
<dbReference type="Ensembl" id="ENSBTAT00000125440.1">
    <property type="protein sequence ID" value="ENSBTAP00000083370.1"/>
    <property type="gene ID" value="ENSBTAG00000059337.1"/>
</dbReference>
<dbReference type="Ensembl" id="ENSBTAT00000136001.1">
    <property type="protein sequence ID" value="ENSBTAP00000094026.1"/>
    <property type="gene ID" value="ENSBTAG00000021493.7"/>
</dbReference>
<dbReference type="GeneID" id="281423"/>
<dbReference type="KEGG" id="bta:281423"/>
<dbReference type="CTD" id="5619"/>
<dbReference type="GeneTree" id="ENSGT01110000271273"/>
<dbReference type="HOGENOM" id="CLU_214580_1_0_1"/>
<dbReference type="InParanoid" id="P02318"/>
<dbReference type="Proteomes" id="UP000009136">
    <property type="component" value="Chromosome 25"/>
</dbReference>
<dbReference type="GO" id="GO:0000786">
    <property type="term" value="C:nucleosome"/>
    <property type="evidence" value="ECO:0007669"/>
    <property type="project" value="UniProtKB-KW"/>
</dbReference>
<dbReference type="GO" id="GO:0005634">
    <property type="term" value="C:nucleus"/>
    <property type="evidence" value="ECO:0007669"/>
    <property type="project" value="UniProtKB-SubCell"/>
</dbReference>
<dbReference type="GO" id="GO:0003677">
    <property type="term" value="F:DNA binding"/>
    <property type="evidence" value="ECO:0007669"/>
    <property type="project" value="UniProtKB-KW"/>
</dbReference>
<dbReference type="GO" id="GO:0030261">
    <property type="term" value="P:chromosome condensation"/>
    <property type="evidence" value="ECO:0007669"/>
    <property type="project" value="UniProtKB-KW"/>
</dbReference>
<dbReference type="GO" id="GO:0035092">
    <property type="term" value="P:sperm DNA condensation"/>
    <property type="evidence" value="ECO:0007669"/>
    <property type="project" value="InterPro"/>
</dbReference>
<dbReference type="InterPro" id="IPR000221">
    <property type="entry name" value="Protamine_P1"/>
</dbReference>
<dbReference type="Pfam" id="PF00260">
    <property type="entry name" value="Protamine_P1"/>
    <property type="match status" value="1"/>
</dbReference>
<dbReference type="PROSITE" id="PS00048">
    <property type="entry name" value="PROTAMINE_P1"/>
    <property type="match status" value="1"/>
</dbReference>
<protein>
    <recommendedName>
        <fullName>Sperm protamine P1</fullName>
    </recommendedName>
    <alternativeName>
        <fullName>Cysteine-rich protamine</fullName>
    </alternativeName>
</protein>
<name>HSP1_BOVIN</name>
<comment type="function">
    <text>Protamines substitute for histones in the chromatin of sperm during the haploid phase of spermatogenesis. They compact sperm DNA into a highly condensed, stable and inactive complex.</text>
</comment>
<comment type="subunit">
    <text>Cross-linked by interchain disulfide bonds around the DNA-helix.</text>
</comment>
<comment type="subcellular location">
    <subcellularLocation>
        <location>Nucleus</location>
    </subcellularLocation>
    <subcellularLocation>
        <location>Chromosome</location>
    </subcellularLocation>
</comment>
<comment type="tissue specificity">
    <text>Testis.</text>
</comment>
<comment type="PTM">
    <text evidence="1">Phosphorylated by SRPK1.</text>
</comment>
<comment type="similarity">
    <text evidence="5">Belongs to the protamine P1 family.</text>
</comment>
<organism>
    <name type="scientific">Bos taurus</name>
    <name type="common">Bovine</name>
    <dbReference type="NCBI Taxonomy" id="9913"/>
    <lineage>
        <taxon>Eukaryota</taxon>
        <taxon>Metazoa</taxon>
        <taxon>Chordata</taxon>
        <taxon>Craniata</taxon>
        <taxon>Vertebrata</taxon>
        <taxon>Euteleostomi</taxon>
        <taxon>Mammalia</taxon>
        <taxon>Eutheria</taxon>
        <taxon>Laurasiatheria</taxon>
        <taxon>Artiodactyla</taxon>
        <taxon>Ruminantia</taxon>
        <taxon>Pecora</taxon>
        <taxon>Bovidae</taxon>
        <taxon>Bovinae</taxon>
        <taxon>Bos</taxon>
    </lineage>
</organism>